<accession>Q669R9</accession>
<organism>
    <name type="scientific">Yersinia pseudotuberculosis serotype I (strain IP32953)</name>
    <dbReference type="NCBI Taxonomy" id="273123"/>
    <lineage>
        <taxon>Bacteria</taxon>
        <taxon>Pseudomonadati</taxon>
        <taxon>Pseudomonadota</taxon>
        <taxon>Gammaproteobacteria</taxon>
        <taxon>Enterobacterales</taxon>
        <taxon>Yersiniaceae</taxon>
        <taxon>Yersinia</taxon>
    </lineage>
</organism>
<name>BGAL_YERPS</name>
<keyword id="KW-0326">Glycosidase</keyword>
<keyword id="KW-0378">Hydrolase</keyword>
<keyword id="KW-0460">Magnesium</keyword>
<keyword id="KW-0479">Metal-binding</keyword>
<keyword id="KW-0915">Sodium</keyword>
<proteinExistence type="inferred from homology"/>
<comment type="catalytic activity">
    <reaction evidence="1">
        <text>Hydrolysis of terminal non-reducing beta-D-galactose residues in beta-D-galactosides.</text>
        <dbReference type="EC" id="3.2.1.23"/>
    </reaction>
</comment>
<comment type="cofactor">
    <cofactor evidence="1">
        <name>Mg(2+)</name>
        <dbReference type="ChEBI" id="CHEBI:18420"/>
    </cofactor>
    <text evidence="1">Binds 2 magnesium ions per monomer.</text>
</comment>
<comment type="cofactor">
    <cofactor evidence="1">
        <name>Na(+)</name>
        <dbReference type="ChEBI" id="CHEBI:29101"/>
    </cofactor>
    <text evidence="1">Binds 1 sodium ion per monomer.</text>
</comment>
<comment type="subunit">
    <text evidence="1">Homotetramer.</text>
</comment>
<comment type="similarity">
    <text evidence="1">Belongs to the glycosyl hydrolase 2 family.</text>
</comment>
<dbReference type="EC" id="3.2.1.23" evidence="1"/>
<dbReference type="EMBL" id="BX936398">
    <property type="protein sequence ID" value="CAH21653.1"/>
    <property type="molecule type" value="Genomic_DNA"/>
</dbReference>
<dbReference type="RefSeq" id="WP_011192578.1">
    <property type="nucleotide sequence ID" value="NC_006155.1"/>
</dbReference>
<dbReference type="SMR" id="Q669R9"/>
<dbReference type="CAZy" id="GH2">
    <property type="family name" value="Glycoside Hydrolase Family 2"/>
</dbReference>
<dbReference type="GeneID" id="49785580"/>
<dbReference type="KEGG" id="ypo:BZ17_37"/>
<dbReference type="KEGG" id="yps:YPTB2415"/>
<dbReference type="PATRIC" id="fig|273123.14.peg.40"/>
<dbReference type="Proteomes" id="UP000001011">
    <property type="component" value="Chromosome"/>
</dbReference>
<dbReference type="GO" id="GO:0009341">
    <property type="term" value="C:beta-galactosidase complex"/>
    <property type="evidence" value="ECO:0007669"/>
    <property type="project" value="InterPro"/>
</dbReference>
<dbReference type="GO" id="GO:0004565">
    <property type="term" value="F:beta-galactosidase activity"/>
    <property type="evidence" value="ECO:0007669"/>
    <property type="project" value="UniProtKB-EC"/>
</dbReference>
<dbReference type="GO" id="GO:0030246">
    <property type="term" value="F:carbohydrate binding"/>
    <property type="evidence" value="ECO:0007669"/>
    <property type="project" value="InterPro"/>
</dbReference>
<dbReference type="GO" id="GO:0000287">
    <property type="term" value="F:magnesium ion binding"/>
    <property type="evidence" value="ECO:0007669"/>
    <property type="project" value="UniProtKB-UniRule"/>
</dbReference>
<dbReference type="GO" id="GO:0005990">
    <property type="term" value="P:lactose catabolic process"/>
    <property type="evidence" value="ECO:0007669"/>
    <property type="project" value="TreeGrafter"/>
</dbReference>
<dbReference type="FunFam" id="2.60.120.260:FF:000058">
    <property type="entry name" value="Beta-galactosidase"/>
    <property type="match status" value="1"/>
</dbReference>
<dbReference type="FunFam" id="3.20.20.80:FF:000018">
    <property type="entry name" value="Beta-galactosidase"/>
    <property type="match status" value="1"/>
</dbReference>
<dbReference type="Gene3D" id="2.70.98.10">
    <property type="match status" value="1"/>
</dbReference>
<dbReference type="Gene3D" id="2.60.120.260">
    <property type="entry name" value="Galactose-binding domain-like"/>
    <property type="match status" value="1"/>
</dbReference>
<dbReference type="Gene3D" id="3.20.20.80">
    <property type="entry name" value="Glycosidases"/>
    <property type="match status" value="1"/>
</dbReference>
<dbReference type="Gene3D" id="2.60.40.10">
    <property type="entry name" value="Immunoglobulins"/>
    <property type="match status" value="2"/>
</dbReference>
<dbReference type="HAMAP" id="MF_01687">
    <property type="entry name" value="Beta_gal"/>
    <property type="match status" value="1"/>
</dbReference>
<dbReference type="InterPro" id="IPR004199">
    <property type="entry name" value="B-gal_small/dom_5"/>
</dbReference>
<dbReference type="InterPro" id="IPR050347">
    <property type="entry name" value="Bact_Beta-galactosidase"/>
</dbReference>
<dbReference type="InterPro" id="IPR036156">
    <property type="entry name" value="Beta-gal/glucu_dom_sf"/>
</dbReference>
<dbReference type="InterPro" id="IPR011013">
    <property type="entry name" value="Gal_mutarotase_sf_dom"/>
</dbReference>
<dbReference type="InterPro" id="IPR008979">
    <property type="entry name" value="Galactose-bd-like_sf"/>
</dbReference>
<dbReference type="InterPro" id="IPR014718">
    <property type="entry name" value="GH-type_carb-bd"/>
</dbReference>
<dbReference type="InterPro" id="IPR006101">
    <property type="entry name" value="Glyco_hydro_2"/>
</dbReference>
<dbReference type="InterPro" id="IPR023232">
    <property type="entry name" value="Glyco_hydro_2_AS"/>
</dbReference>
<dbReference type="InterPro" id="IPR023933">
    <property type="entry name" value="Glyco_hydro_2_beta_Galsidase"/>
</dbReference>
<dbReference type="InterPro" id="IPR006103">
    <property type="entry name" value="Glyco_hydro_2_cat"/>
</dbReference>
<dbReference type="InterPro" id="IPR023230">
    <property type="entry name" value="Glyco_hydro_2_CS"/>
</dbReference>
<dbReference type="InterPro" id="IPR006102">
    <property type="entry name" value="Glyco_hydro_2_Ig-like"/>
</dbReference>
<dbReference type="InterPro" id="IPR006104">
    <property type="entry name" value="Glyco_hydro_2_N"/>
</dbReference>
<dbReference type="InterPro" id="IPR017853">
    <property type="entry name" value="Glycoside_hydrolase_SF"/>
</dbReference>
<dbReference type="InterPro" id="IPR013783">
    <property type="entry name" value="Ig-like_fold"/>
</dbReference>
<dbReference type="InterPro" id="IPR032312">
    <property type="entry name" value="LacZ_4"/>
</dbReference>
<dbReference type="NCBIfam" id="NF007074">
    <property type="entry name" value="PRK09525.1"/>
    <property type="match status" value="1"/>
</dbReference>
<dbReference type="PANTHER" id="PTHR46323">
    <property type="entry name" value="BETA-GALACTOSIDASE"/>
    <property type="match status" value="1"/>
</dbReference>
<dbReference type="PANTHER" id="PTHR46323:SF2">
    <property type="entry name" value="BETA-GALACTOSIDASE"/>
    <property type="match status" value="1"/>
</dbReference>
<dbReference type="Pfam" id="PF02929">
    <property type="entry name" value="Bgal_small_N"/>
    <property type="match status" value="1"/>
</dbReference>
<dbReference type="Pfam" id="PF00703">
    <property type="entry name" value="Glyco_hydro_2"/>
    <property type="match status" value="1"/>
</dbReference>
<dbReference type="Pfam" id="PF02836">
    <property type="entry name" value="Glyco_hydro_2_C"/>
    <property type="match status" value="1"/>
</dbReference>
<dbReference type="Pfam" id="PF02837">
    <property type="entry name" value="Glyco_hydro_2_N"/>
    <property type="match status" value="1"/>
</dbReference>
<dbReference type="Pfam" id="PF16353">
    <property type="entry name" value="LacZ_4"/>
    <property type="match status" value="1"/>
</dbReference>
<dbReference type="PRINTS" id="PR00132">
    <property type="entry name" value="GLHYDRLASE2"/>
</dbReference>
<dbReference type="SMART" id="SM01038">
    <property type="entry name" value="Bgal_small_N"/>
    <property type="match status" value="1"/>
</dbReference>
<dbReference type="SUPFAM" id="SSF51445">
    <property type="entry name" value="(Trans)glycosidases"/>
    <property type="match status" value="1"/>
</dbReference>
<dbReference type="SUPFAM" id="SSF49303">
    <property type="entry name" value="beta-Galactosidase/glucuronidase domain"/>
    <property type="match status" value="2"/>
</dbReference>
<dbReference type="SUPFAM" id="SSF74650">
    <property type="entry name" value="Galactose mutarotase-like"/>
    <property type="match status" value="1"/>
</dbReference>
<dbReference type="SUPFAM" id="SSF49785">
    <property type="entry name" value="Galactose-binding domain-like"/>
    <property type="match status" value="1"/>
</dbReference>
<dbReference type="PROSITE" id="PS00719">
    <property type="entry name" value="GLYCOSYL_HYDROL_F2_1"/>
    <property type="match status" value="1"/>
</dbReference>
<dbReference type="PROSITE" id="PS00608">
    <property type="entry name" value="GLYCOSYL_HYDROL_F2_2"/>
    <property type="match status" value="1"/>
</dbReference>
<evidence type="ECO:0000255" key="1">
    <source>
        <dbReference type="HAMAP-Rule" id="MF_01687"/>
    </source>
</evidence>
<protein>
    <recommendedName>
        <fullName evidence="1">Beta-galactosidase</fullName>
        <shortName evidence="1">Beta-gal</shortName>
        <ecNumber evidence="1">3.2.1.23</ecNumber>
    </recommendedName>
    <alternativeName>
        <fullName evidence="1">Lactase</fullName>
    </alternativeName>
</protein>
<reference key="1">
    <citation type="journal article" date="2004" name="Proc. Natl. Acad. Sci. U.S.A.">
        <title>Insights into the evolution of Yersinia pestis through whole-genome comparison with Yersinia pseudotuberculosis.</title>
        <authorList>
            <person name="Chain P.S.G."/>
            <person name="Carniel E."/>
            <person name="Larimer F.W."/>
            <person name="Lamerdin J."/>
            <person name="Stoutland P.O."/>
            <person name="Regala W.M."/>
            <person name="Georgescu A.M."/>
            <person name="Vergez L.M."/>
            <person name="Land M.L."/>
            <person name="Motin V.L."/>
            <person name="Brubaker R.R."/>
            <person name="Fowler J."/>
            <person name="Hinnebusch J."/>
            <person name="Marceau M."/>
            <person name="Medigue C."/>
            <person name="Simonet M."/>
            <person name="Chenal-Francisque V."/>
            <person name="Souza B."/>
            <person name="Dacheux D."/>
            <person name="Elliott J.M."/>
            <person name="Derbise A."/>
            <person name="Hauser L.J."/>
            <person name="Garcia E."/>
        </authorList>
    </citation>
    <scope>NUCLEOTIDE SEQUENCE [LARGE SCALE GENOMIC DNA]</scope>
    <source>
        <strain>IP32953</strain>
    </source>
</reference>
<gene>
    <name evidence="1" type="primary">lacZ</name>
    <name type="ordered locus">YPTB2415</name>
</gene>
<sequence length="1066" mass="123480">MTSQEKVPFQVQLSLPQILSRRDWENPQITQYHRLEAHPPFHSWRDVESAQKDRPSPQQQTLNGLWSFSYFTQPEAVPEHWVRCDLAEAKPLPVPANWQLHGYDAPIYTNIQYPIPVNPPRVPDLNPTGCYSRDFTLEPSWLASGKTRIIFDGVSSAFYLWCNGQWVGYSQDSRLPAEFDLTPYLQAGSNRIAVLVLRWSDGSYLEDQDMWRMSGIFRDVKLLHKPEIHLRDIHIMTHLSPEFTSANLEVMAAVNIPSLQLNDPQVTGSYQLRVQLWLADKLVASLQQPLGTQAIDERGPYTDRTQLVLRIDQPLLWSAEQPTLYRAVVSLLNHQQELIEAEAYDVGFRQVAIHQGLLKINGKAVLIRGVNRHEHHPQTGQAIDEESLLQDILLMKQHNFNAVRCSHYPNHPLWYRLCDRYGLYVVDEANIETHGMQPMSRLSDDPSWFSAFSERVTRMVQRDRNHPCIIIWSLGNESGHGATHDALYRWIKTNDPTRPVQYEGGGANTLATDILCPMYARVDEDQPFPAVPKWSIKKWIGLPNESRPLILCEYAHAMGNSFGGFARYWQAFRQYPRLQGGFIWDWVDQSLTHHNDHGQPYWAYGGDFGDTPNDRQFCMNGLVFPDRSPHPSLYEAQCAQQFFQFSLLSTTPLVINITSEYLFRESDNEQLYWRIMLEGESVLEGSQPLNLSPESSQCYRLAEKLPTLNKPGQLWLNVEIRQPKETPWSPAQHRSAWHQWRLPQPLFSPSSDLTNATAHYAPQLQHNLQLQHNRQLQHDLQLQQDEQHIKVTYQQQCWQFSRQTGRLDQWWVADKPMLLRPLQDQFVRAPLDNDIGISEATHIDPNAWVERWKKAGMYQLQQRCLSLHVDHLSHSVQISAEYGYEFEQEPLLHSHWVYRFDRHGRMTIDVNVRIATSLPAPARIGMCCQLADISPTVEWLGLGPHENYPDRQLAAQYGHWSLPLEQMHTAYIFPSENGLRCNTHTLNYGRWTLTGDFHFGISRYSTQQLMVTSHQHLLEPEEGTWLNIDGFHMGVGGDDSWSPSVHIDDILTRETYQYQICWQYKV</sequence>
<feature type="chain" id="PRO_0000367020" description="Beta-galactosidase">
    <location>
        <begin position="1"/>
        <end position="1066"/>
    </location>
</feature>
<feature type="active site" description="Proton donor" evidence="1">
    <location>
        <position position="477"/>
    </location>
</feature>
<feature type="active site" description="Nucleophile" evidence="1">
    <location>
        <position position="553"/>
    </location>
</feature>
<feature type="binding site" evidence="1">
    <location>
        <position position="110"/>
    </location>
    <ligand>
        <name>substrate</name>
    </ligand>
</feature>
<feature type="binding site" evidence="1">
    <location>
        <position position="209"/>
    </location>
    <ligand>
        <name>Na(+)</name>
        <dbReference type="ChEBI" id="CHEBI:29101"/>
    </ligand>
</feature>
<feature type="binding site" evidence="1">
    <location>
        <position position="209"/>
    </location>
    <ligand>
        <name>substrate</name>
    </ligand>
</feature>
<feature type="binding site" evidence="1">
    <location>
        <position position="432"/>
    </location>
    <ligand>
        <name>Mg(2+)</name>
        <dbReference type="ChEBI" id="CHEBI:18420"/>
        <label>1</label>
    </ligand>
</feature>
<feature type="binding site" evidence="1">
    <location>
        <position position="434"/>
    </location>
    <ligand>
        <name>Mg(2+)</name>
        <dbReference type="ChEBI" id="CHEBI:18420"/>
        <label>1</label>
    </ligand>
</feature>
<feature type="binding site" evidence="1">
    <location>
        <position position="477"/>
    </location>
    <ligand>
        <name>Mg(2+)</name>
        <dbReference type="ChEBI" id="CHEBI:18420"/>
        <label>1</label>
    </ligand>
</feature>
<feature type="binding site" evidence="1">
    <location>
        <position position="477"/>
    </location>
    <ligand>
        <name>substrate</name>
    </ligand>
</feature>
<feature type="binding site" evidence="1">
    <location>
        <begin position="553"/>
        <end position="556"/>
    </location>
    <ligand>
        <name>substrate</name>
    </ligand>
</feature>
<feature type="binding site" evidence="1">
    <location>
        <position position="613"/>
    </location>
    <ligand>
        <name>Mg(2+)</name>
        <dbReference type="ChEBI" id="CHEBI:18420"/>
        <label>2</label>
    </ligand>
</feature>
<feature type="binding site" evidence="1">
    <location>
        <position position="617"/>
    </location>
    <ligand>
        <name>Na(+)</name>
        <dbReference type="ChEBI" id="CHEBI:29101"/>
    </ligand>
</feature>
<feature type="binding site" evidence="1">
    <location>
        <position position="620"/>
    </location>
    <ligand>
        <name>Na(+)</name>
        <dbReference type="ChEBI" id="CHEBI:29101"/>
    </ligand>
</feature>
<feature type="binding site" evidence="1">
    <location>
        <position position="620"/>
    </location>
    <ligand>
        <name>substrate</name>
    </ligand>
</feature>
<feature type="binding site" evidence="1">
    <location>
        <position position="1041"/>
    </location>
    <ligand>
        <name>substrate</name>
    </ligand>
</feature>
<feature type="site" description="Transition state stabilizer" evidence="1">
    <location>
        <position position="373"/>
    </location>
</feature>
<feature type="site" description="Transition state stabilizer" evidence="1">
    <location>
        <position position="407"/>
    </location>
</feature>